<comment type="function">
    <text evidence="1">Produces ATP from ADP in the presence of a proton gradient across the membrane. The alpha chain is a regulatory subunit.</text>
</comment>
<comment type="catalytic activity">
    <reaction evidence="1">
        <text>ATP + H2O + 4 H(+)(in) = ADP + phosphate + 5 H(+)(out)</text>
        <dbReference type="Rhea" id="RHEA:57720"/>
        <dbReference type="ChEBI" id="CHEBI:15377"/>
        <dbReference type="ChEBI" id="CHEBI:15378"/>
        <dbReference type="ChEBI" id="CHEBI:30616"/>
        <dbReference type="ChEBI" id="CHEBI:43474"/>
        <dbReference type="ChEBI" id="CHEBI:456216"/>
        <dbReference type="EC" id="7.1.2.2"/>
    </reaction>
</comment>
<comment type="subunit">
    <text evidence="1">F-type ATPases have 2 components, CF(1) - the catalytic core - and CF(0) - the membrane proton channel. CF(1) has five subunits: alpha(3), beta(3), gamma(1), delta(1), epsilon(1). CF(0) has three main subunits: a(1), b(2) and c(9-12). The alpha and beta chains form an alternating ring which encloses part of the gamma chain. CF(1) is attached to CF(0) by a central stalk formed by the gamma and epsilon chains, while a peripheral stalk is formed by the delta and b chains.</text>
</comment>
<comment type="subcellular location">
    <subcellularLocation>
        <location evidence="1">Cell inner membrane</location>
        <topology evidence="1">Peripheral membrane protein</topology>
    </subcellularLocation>
</comment>
<comment type="similarity">
    <text evidence="1">Belongs to the ATPase alpha/beta chains family.</text>
</comment>
<gene>
    <name evidence="1" type="primary">atpA</name>
    <name type="ordered locus">CKO_00073</name>
</gene>
<evidence type="ECO:0000255" key="1">
    <source>
        <dbReference type="HAMAP-Rule" id="MF_01346"/>
    </source>
</evidence>
<proteinExistence type="inferred from homology"/>
<name>ATPA_CITK8</name>
<sequence>MQLNSTEISELIKQRIAQFNVVSEAHNEGTIVSVSDGVIRIHGLADCMQGEMISLPGNRYAIALNLERDSVGAVVMGPYADLAEGMKVKCTGRILEVPVGRGLLGRVVNTLGAPIDGKGPVEHDGFSAVEAIAPGVIERQSVDQPVQTGYKAVDSMIPIGRGQRELIIGDRQTGKTALAIDAIINQRDSGIKCVYVAIGQKASTISNVVRKLEEHGALQNTIVVVATASESAALQYLAPYAGCAMGEYFRDRGEDALIIYDDLSKQAVAYRQISLLLRRPPGREAFPGDVFYLHSRLLERAARVNVEYVEAFTKGEVKGKTGSLTALPIIETQAGDVSAFVPTNVISITDGQIFLETNLFNSGIRPAVNPGISVSRVGGAAQTKIMKKLSGGIRTALAQYRELAAFSQFASDLDDATRKQLDHGQKVTELLKQKQYAPMSVAQQSLVLFAAERGYLADVELAKIGSFEAALLAYVDRDHAPLMQEINQSGGYNDEIEGKLKGILDSFKATQSW</sequence>
<organism>
    <name type="scientific">Citrobacter koseri (strain ATCC BAA-895 / CDC 4225-83 / SGSC4696)</name>
    <dbReference type="NCBI Taxonomy" id="290338"/>
    <lineage>
        <taxon>Bacteria</taxon>
        <taxon>Pseudomonadati</taxon>
        <taxon>Pseudomonadota</taxon>
        <taxon>Gammaproteobacteria</taxon>
        <taxon>Enterobacterales</taxon>
        <taxon>Enterobacteriaceae</taxon>
        <taxon>Citrobacter</taxon>
    </lineage>
</organism>
<protein>
    <recommendedName>
        <fullName evidence="1">ATP synthase subunit alpha</fullName>
        <ecNumber evidence="1">7.1.2.2</ecNumber>
    </recommendedName>
    <alternativeName>
        <fullName evidence="1">ATP synthase F1 sector subunit alpha</fullName>
    </alternativeName>
    <alternativeName>
        <fullName evidence="1">F-ATPase subunit alpha</fullName>
    </alternativeName>
</protein>
<reference key="1">
    <citation type="submission" date="2007-08" db="EMBL/GenBank/DDBJ databases">
        <authorList>
            <consortium name="The Citrobacter koseri Genome Sequencing Project"/>
            <person name="McClelland M."/>
            <person name="Sanderson E.K."/>
            <person name="Porwollik S."/>
            <person name="Spieth J."/>
            <person name="Clifton W.S."/>
            <person name="Latreille P."/>
            <person name="Courtney L."/>
            <person name="Wang C."/>
            <person name="Pepin K."/>
            <person name="Bhonagiri V."/>
            <person name="Nash W."/>
            <person name="Johnson M."/>
            <person name="Thiruvilangam P."/>
            <person name="Wilson R."/>
        </authorList>
    </citation>
    <scope>NUCLEOTIDE SEQUENCE [LARGE SCALE GENOMIC DNA]</scope>
    <source>
        <strain>ATCC BAA-895 / CDC 4225-83 / SGSC4696</strain>
    </source>
</reference>
<dbReference type="EC" id="7.1.2.2" evidence="1"/>
<dbReference type="EMBL" id="CP000822">
    <property type="protein sequence ID" value="ABV11252.1"/>
    <property type="molecule type" value="Genomic_DNA"/>
</dbReference>
<dbReference type="RefSeq" id="WP_012000831.1">
    <property type="nucleotide sequence ID" value="NC_009792.1"/>
</dbReference>
<dbReference type="SMR" id="A8ACN8"/>
<dbReference type="STRING" id="290338.CKO_00073"/>
<dbReference type="GeneID" id="45134375"/>
<dbReference type="KEGG" id="cko:CKO_00073"/>
<dbReference type="HOGENOM" id="CLU_010091_2_1_6"/>
<dbReference type="OrthoDB" id="9803053at2"/>
<dbReference type="Proteomes" id="UP000008148">
    <property type="component" value="Chromosome"/>
</dbReference>
<dbReference type="GO" id="GO:0005886">
    <property type="term" value="C:plasma membrane"/>
    <property type="evidence" value="ECO:0007669"/>
    <property type="project" value="UniProtKB-SubCell"/>
</dbReference>
<dbReference type="GO" id="GO:0045259">
    <property type="term" value="C:proton-transporting ATP synthase complex"/>
    <property type="evidence" value="ECO:0007669"/>
    <property type="project" value="UniProtKB-KW"/>
</dbReference>
<dbReference type="GO" id="GO:0043531">
    <property type="term" value="F:ADP binding"/>
    <property type="evidence" value="ECO:0007669"/>
    <property type="project" value="TreeGrafter"/>
</dbReference>
<dbReference type="GO" id="GO:0005524">
    <property type="term" value="F:ATP binding"/>
    <property type="evidence" value="ECO:0007669"/>
    <property type="project" value="UniProtKB-UniRule"/>
</dbReference>
<dbReference type="GO" id="GO:0046933">
    <property type="term" value="F:proton-transporting ATP synthase activity, rotational mechanism"/>
    <property type="evidence" value="ECO:0007669"/>
    <property type="project" value="UniProtKB-UniRule"/>
</dbReference>
<dbReference type="CDD" id="cd18113">
    <property type="entry name" value="ATP-synt_F1_alpha_C"/>
    <property type="match status" value="1"/>
</dbReference>
<dbReference type="CDD" id="cd18116">
    <property type="entry name" value="ATP-synt_F1_alpha_N"/>
    <property type="match status" value="1"/>
</dbReference>
<dbReference type="CDD" id="cd01132">
    <property type="entry name" value="F1-ATPase_alpha_CD"/>
    <property type="match status" value="1"/>
</dbReference>
<dbReference type="FunFam" id="1.20.150.20:FF:000001">
    <property type="entry name" value="ATP synthase subunit alpha"/>
    <property type="match status" value="1"/>
</dbReference>
<dbReference type="FunFam" id="2.40.30.20:FF:000001">
    <property type="entry name" value="ATP synthase subunit alpha"/>
    <property type="match status" value="1"/>
</dbReference>
<dbReference type="FunFam" id="3.40.50.300:FF:000002">
    <property type="entry name" value="ATP synthase subunit alpha"/>
    <property type="match status" value="1"/>
</dbReference>
<dbReference type="Gene3D" id="2.40.30.20">
    <property type="match status" value="1"/>
</dbReference>
<dbReference type="Gene3D" id="1.20.150.20">
    <property type="entry name" value="ATP synthase alpha/beta chain, C-terminal domain"/>
    <property type="match status" value="1"/>
</dbReference>
<dbReference type="Gene3D" id="3.40.50.300">
    <property type="entry name" value="P-loop containing nucleotide triphosphate hydrolases"/>
    <property type="match status" value="1"/>
</dbReference>
<dbReference type="HAMAP" id="MF_01346">
    <property type="entry name" value="ATP_synth_alpha_bact"/>
    <property type="match status" value="1"/>
</dbReference>
<dbReference type="InterPro" id="IPR023366">
    <property type="entry name" value="ATP_synth_asu-like_sf"/>
</dbReference>
<dbReference type="InterPro" id="IPR000793">
    <property type="entry name" value="ATP_synth_asu_C"/>
</dbReference>
<dbReference type="InterPro" id="IPR038376">
    <property type="entry name" value="ATP_synth_asu_C_sf"/>
</dbReference>
<dbReference type="InterPro" id="IPR033732">
    <property type="entry name" value="ATP_synth_F1_a_nt-bd_dom"/>
</dbReference>
<dbReference type="InterPro" id="IPR005294">
    <property type="entry name" value="ATP_synth_F1_asu"/>
</dbReference>
<dbReference type="InterPro" id="IPR020003">
    <property type="entry name" value="ATPase_a/bsu_AS"/>
</dbReference>
<dbReference type="InterPro" id="IPR004100">
    <property type="entry name" value="ATPase_F1/V1/A1_a/bsu_N"/>
</dbReference>
<dbReference type="InterPro" id="IPR036121">
    <property type="entry name" value="ATPase_F1/V1/A1_a/bsu_N_sf"/>
</dbReference>
<dbReference type="InterPro" id="IPR000194">
    <property type="entry name" value="ATPase_F1/V1/A1_a/bsu_nucl-bd"/>
</dbReference>
<dbReference type="InterPro" id="IPR027417">
    <property type="entry name" value="P-loop_NTPase"/>
</dbReference>
<dbReference type="NCBIfam" id="TIGR00962">
    <property type="entry name" value="atpA"/>
    <property type="match status" value="1"/>
</dbReference>
<dbReference type="NCBIfam" id="NF009884">
    <property type="entry name" value="PRK13343.1"/>
    <property type="match status" value="1"/>
</dbReference>
<dbReference type="PANTHER" id="PTHR48082">
    <property type="entry name" value="ATP SYNTHASE SUBUNIT ALPHA, MITOCHONDRIAL"/>
    <property type="match status" value="1"/>
</dbReference>
<dbReference type="PANTHER" id="PTHR48082:SF2">
    <property type="entry name" value="ATP SYNTHASE SUBUNIT ALPHA, MITOCHONDRIAL"/>
    <property type="match status" value="1"/>
</dbReference>
<dbReference type="Pfam" id="PF00006">
    <property type="entry name" value="ATP-synt_ab"/>
    <property type="match status" value="1"/>
</dbReference>
<dbReference type="Pfam" id="PF00306">
    <property type="entry name" value="ATP-synt_ab_C"/>
    <property type="match status" value="1"/>
</dbReference>
<dbReference type="Pfam" id="PF02874">
    <property type="entry name" value="ATP-synt_ab_N"/>
    <property type="match status" value="1"/>
</dbReference>
<dbReference type="SUPFAM" id="SSF47917">
    <property type="entry name" value="C-terminal domain of alpha and beta subunits of F1 ATP synthase"/>
    <property type="match status" value="1"/>
</dbReference>
<dbReference type="SUPFAM" id="SSF50615">
    <property type="entry name" value="N-terminal domain of alpha and beta subunits of F1 ATP synthase"/>
    <property type="match status" value="1"/>
</dbReference>
<dbReference type="SUPFAM" id="SSF52540">
    <property type="entry name" value="P-loop containing nucleoside triphosphate hydrolases"/>
    <property type="match status" value="1"/>
</dbReference>
<dbReference type="PROSITE" id="PS00152">
    <property type="entry name" value="ATPASE_ALPHA_BETA"/>
    <property type="match status" value="1"/>
</dbReference>
<keyword id="KW-0066">ATP synthesis</keyword>
<keyword id="KW-0067">ATP-binding</keyword>
<keyword id="KW-0997">Cell inner membrane</keyword>
<keyword id="KW-1003">Cell membrane</keyword>
<keyword id="KW-0139">CF(1)</keyword>
<keyword id="KW-0375">Hydrogen ion transport</keyword>
<keyword id="KW-0406">Ion transport</keyword>
<keyword id="KW-0472">Membrane</keyword>
<keyword id="KW-0547">Nucleotide-binding</keyword>
<keyword id="KW-1185">Reference proteome</keyword>
<keyword id="KW-1278">Translocase</keyword>
<keyword id="KW-0813">Transport</keyword>
<accession>A8ACN8</accession>
<feature type="chain" id="PRO_1000055060" description="ATP synthase subunit alpha">
    <location>
        <begin position="1"/>
        <end position="513"/>
    </location>
</feature>
<feature type="binding site" evidence="1">
    <location>
        <begin position="169"/>
        <end position="176"/>
    </location>
    <ligand>
        <name>ATP</name>
        <dbReference type="ChEBI" id="CHEBI:30616"/>
    </ligand>
</feature>
<feature type="site" description="Required for activity" evidence="1">
    <location>
        <position position="373"/>
    </location>
</feature>